<keyword id="KW-0997">Cell inner membrane</keyword>
<keyword id="KW-1003">Cell membrane</keyword>
<keyword id="KW-0133">Cell shape</keyword>
<keyword id="KW-0961">Cell wall biogenesis/degradation</keyword>
<keyword id="KW-0328">Glycosyltransferase</keyword>
<keyword id="KW-0472">Membrane</keyword>
<keyword id="KW-0573">Peptidoglycan synthesis</keyword>
<keyword id="KW-0808">Transferase</keyword>
<keyword id="KW-0812">Transmembrane</keyword>
<keyword id="KW-1133">Transmembrane helix</keyword>
<name>MTGA_PECCP</name>
<sequence length="244" mass="27501">MKWSRGRGGLLAWLKRLIVRSVLVVIGAWLAGILLFSFLPVPFSAVMVDRQISAWLKGEFSYVAHSDWVSMEEIAPEMALAVMAAEDQKFPDHWGFDLDAIGQALKHNERNTQRIRGASTLSQQMVKNLFLWDGRSWVRKGLEAGITTGVELVWTKRRILTVYLNIAEFGPGIFGVEAAARRYFNKPASRLTASESALLAAVLPNPIRFRANAPSSYVIQRQQWILRQMRQMGGDAFLRANNLN</sequence>
<protein>
    <recommendedName>
        <fullName evidence="1">Biosynthetic peptidoglycan transglycosylase</fullName>
        <ecNumber evidence="1">2.4.99.28</ecNumber>
    </recommendedName>
    <alternativeName>
        <fullName evidence="1">Glycan polymerase</fullName>
    </alternativeName>
    <alternativeName>
        <fullName evidence="1">Peptidoglycan glycosyltransferase MtgA</fullName>
        <shortName evidence="1">PGT</shortName>
    </alternativeName>
</protein>
<evidence type="ECO:0000255" key="1">
    <source>
        <dbReference type="HAMAP-Rule" id="MF_00766"/>
    </source>
</evidence>
<accession>C6DIR2</accession>
<feature type="chain" id="PRO_1000212892" description="Biosynthetic peptidoglycan transglycosylase">
    <location>
        <begin position="1"/>
        <end position="244"/>
    </location>
</feature>
<feature type="transmembrane region" description="Helical" evidence="1">
    <location>
        <begin position="23"/>
        <end position="43"/>
    </location>
</feature>
<organism>
    <name type="scientific">Pectobacterium carotovorum subsp. carotovorum (strain PC1)</name>
    <dbReference type="NCBI Taxonomy" id="561230"/>
    <lineage>
        <taxon>Bacteria</taxon>
        <taxon>Pseudomonadati</taxon>
        <taxon>Pseudomonadota</taxon>
        <taxon>Gammaproteobacteria</taxon>
        <taxon>Enterobacterales</taxon>
        <taxon>Pectobacteriaceae</taxon>
        <taxon>Pectobacterium</taxon>
    </lineage>
</organism>
<gene>
    <name evidence="1" type="primary">mtgA</name>
    <name type="ordered locus">PC1_0303</name>
</gene>
<proteinExistence type="inferred from homology"/>
<dbReference type="EC" id="2.4.99.28" evidence="1"/>
<dbReference type="EMBL" id="CP001657">
    <property type="protein sequence ID" value="ACT11362.1"/>
    <property type="molecule type" value="Genomic_DNA"/>
</dbReference>
<dbReference type="RefSeq" id="WP_012773021.1">
    <property type="nucleotide sequence ID" value="NC_012917.1"/>
</dbReference>
<dbReference type="SMR" id="C6DIR2"/>
<dbReference type="STRING" id="561230.PC1_0303"/>
<dbReference type="CAZy" id="GT51">
    <property type="family name" value="Glycosyltransferase Family 51"/>
</dbReference>
<dbReference type="GeneID" id="67795901"/>
<dbReference type="KEGG" id="pct:PC1_0303"/>
<dbReference type="eggNOG" id="COG0744">
    <property type="taxonomic scope" value="Bacteria"/>
</dbReference>
<dbReference type="HOGENOM" id="CLU_006354_1_1_6"/>
<dbReference type="OrthoDB" id="9766909at2"/>
<dbReference type="UniPathway" id="UPA00219"/>
<dbReference type="Proteomes" id="UP000002736">
    <property type="component" value="Chromosome"/>
</dbReference>
<dbReference type="GO" id="GO:0009274">
    <property type="term" value="C:peptidoglycan-based cell wall"/>
    <property type="evidence" value="ECO:0007669"/>
    <property type="project" value="InterPro"/>
</dbReference>
<dbReference type="GO" id="GO:0005886">
    <property type="term" value="C:plasma membrane"/>
    <property type="evidence" value="ECO:0007669"/>
    <property type="project" value="UniProtKB-SubCell"/>
</dbReference>
<dbReference type="GO" id="GO:0016763">
    <property type="term" value="F:pentosyltransferase activity"/>
    <property type="evidence" value="ECO:0007669"/>
    <property type="project" value="InterPro"/>
</dbReference>
<dbReference type="GO" id="GO:0008955">
    <property type="term" value="F:peptidoglycan glycosyltransferase activity"/>
    <property type="evidence" value="ECO:0007669"/>
    <property type="project" value="UniProtKB-UniRule"/>
</dbReference>
<dbReference type="GO" id="GO:0071555">
    <property type="term" value="P:cell wall organization"/>
    <property type="evidence" value="ECO:0007669"/>
    <property type="project" value="UniProtKB-KW"/>
</dbReference>
<dbReference type="GO" id="GO:0009252">
    <property type="term" value="P:peptidoglycan biosynthetic process"/>
    <property type="evidence" value="ECO:0007669"/>
    <property type="project" value="UniProtKB-UniRule"/>
</dbReference>
<dbReference type="GO" id="GO:0008360">
    <property type="term" value="P:regulation of cell shape"/>
    <property type="evidence" value="ECO:0007669"/>
    <property type="project" value="UniProtKB-KW"/>
</dbReference>
<dbReference type="Gene3D" id="1.10.3810.10">
    <property type="entry name" value="Biosynthetic peptidoglycan transglycosylase-like"/>
    <property type="match status" value="1"/>
</dbReference>
<dbReference type="HAMAP" id="MF_00766">
    <property type="entry name" value="PGT_MtgA"/>
    <property type="match status" value="1"/>
</dbReference>
<dbReference type="InterPro" id="IPR001264">
    <property type="entry name" value="Glyco_trans_51"/>
</dbReference>
<dbReference type="InterPro" id="IPR023346">
    <property type="entry name" value="Lysozyme-like_dom_sf"/>
</dbReference>
<dbReference type="InterPro" id="IPR036950">
    <property type="entry name" value="PBP_transglycosylase"/>
</dbReference>
<dbReference type="InterPro" id="IPR011812">
    <property type="entry name" value="Pep_trsgly"/>
</dbReference>
<dbReference type="NCBIfam" id="TIGR02070">
    <property type="entry name" value="mono_pep_trsgly"/>
    <property type="match status" value="1"/>
</dbReference>
<dbReference type="PANTHER" id="PTHR30400:SF0">
    <property type="entry name" value="BIOSYNTHETIC PEPTIDOGLYCAN TRANSGLYCOSYLASE"/>
    <property type="match status" value="1"/>
</dbReference>
<dbReference type="PANTHER" id="PTHR30400">
    <property type="entry name" value="MONOFUNCTIONAL BIOSYNTHETIC PEPTIDOGLYCAN TRANSGLYCOSYLASE"/>
    <property type="match status" value="1"/>
</dbReference>
<dbReference type="Pfam" id="PF00912">
    <property type="entry name" value="Transgly"/>
    <property type="match status" value="1"/>
</dbReference>
<dbReference type="SUPFAM" id="SSF53955">
    <property type="entry name" value="Lysozyme-like"/>
    <property type="match status" value="1"/>
</dbReference>
<comment type="function">
    <text evidence="1">Peptidoglycan polymerase that catalyzes glycan chain elongation from lipid-linked precursors.</text>
</comment>
<comment type="catalytic activity">
    <reaction evidence="1">
        <text>[GlcNAc-(1-&gt;4)-Mur2Ac(oyl-L-Ala-gamma-D-Glu-L-Lys-D-Ala-D-Ala)](n)-di-trans,octa-cis-undecaprenyl diphosphate + beta-D-GlcNAc-(1-&gt;4)-Mur2Ac(oyl-L-Ala-gamma-D-Glu-L-Lys-D-Ala-D-Ala)-di-trans,octa-cis-undecaprenyl diphosphate = [GlcNAc-(1-&gt;4)-Mur2Ac(oyl-L-Ala-gamma-D-Glu-L-Lys-D-Ala-D-Ala)](n+1)-di-trans,octa-cis-undecaprenyl diphosphate + di-trans,octa-cis-undecaprenyl diphosphate + H(+)</text>
        <dbReference type="Rhea" id="RHEA:23708"/>
        <dbReference type="Rhea" id="RHEA-COMP:9602"/>
        <dbReference type="Rhea" id="RHEA-COMP:9603"/>
        <dbReference type="ChEBI" id="CHEBI:15378"/>
        <dbReference type="ChEBI" id="CHEBI:58405"/>
        <dbReference type="ChEBI" id="CHEBI:60033"/>
        <dbReference type="ChEBI" id="CHEBI:78435"/>
        <dbReference type="EC" id="2.4.99.28"/>
    </reaction>
</comment>
<comment type="pathway">
    <text evidence="1">Cell wall biogenesis; peptidoglycan biosynthesis.</text>
</comment>
<comment type="subcellular location">
    <subcellularLocation>
        <location evidence="1">Cell inner membrane</location>
        <topology evidence="1">Single-pass membrane protein</topology>
    </subcellularLocation>
</comment>
<comment type="similarity">
    <text evidence="1">Belongs to the glycosyltransferase 51 family.</text>
</comment>
<reference key="1">
    <citation type="submission" date="2009-07" db="EMBL/GenBank/DDBJ databases">
        <title>Complete sequence of Pectobacterium carotovorum subsp. carotovorum PC1.</title>
        <authorList>
            <consortium name="US DOE Joint Genome Institute"/>
            <person name="Lucas S."/>
            <person name="Copeland A."/>
            <person name="Lapidus A."/>
            <person name="Glavina del Rio T."/>
            <person name="Tice H."/>
            <person name="Bruce D."/>
            <person name="Goodwin L."/>
            <person name="Pitluck S."/>
            <person name="Munk A.C."/>
            <person name="Brettin T."/>
            <person name="Detter J.C."/>
            <person name="Han C."/>
            <person name="Tapia R."/>
            <person name="Larimer F."/>
            <person name="Land M."/>
            <person name="Hauser L."/>
            <person name="Kyrpides N."/>
            <person name="Mikhailova N."/>
            <person name="Balakrishnan V."/>
            <person name="Glasner J."/>
            <person name="Perna N.T."/>
        </authorList>
    </citation>
    <scope>NUCLEOTIDE SEQUENCE [LARGE SCALE GENOMIC DNA]</scope>
    <source>
        <strain>PC1</strain>
    </source>
</reference>